<dbReference type="EC" id="3.2.2.-" evidence="1"/>
<dbReference type="EC" id="4.2.99.18" evidence="1"/>
<dbReference type="EMBL" id="CP000077">
    <property type="protein sequence ID" value="AAY80701.1"/>
    <property type="molecule type" value="Genomic_DNA"/>
</dbReference>
<dbReference type="RefSeq" id="WP_011278203.1">
    <property type="nucleotide sequence ID" value="NC_007181.1"/>
</dbReference>
<dbReference type="SMR" id="Q4J929"/>
<dbReference type="STRING" id="330779.Saci_1367"/>
<dbReference type="GeneID" id="14551869"/>
<dbReference type="KEGG" id="sai:Saci_1367"/>
<dbReference type="PATRIC" id="fig|330779.12.peg.1319"/>
<dbReference type="eggNOG" id="arCOG04357">
    <property type="taxonomic scope" value="Archaea"/>
</dbReference>
<dbReference type="HOGENOM" id="CLU_104937_0_0_2"/>
<dbReference type="Proteomes" id="UP000001018">
    <property type="component" value="Chromosome"/>
</dbReference>
<dbReference type="GO" id="GO:0140078">
    <property type="term" value="F:class I DNA-(apurinic or apyrimidinic site) endonuclease activity"/>
    <property type="evidence" value="ECO:0007669"/>
    <property type="project" value="UniProtKB-EC"/>
</dbReference>
<dbReference type="GO" id="GO:0016799">
    <property type="term" value="F:hydrolase activity, hydrolyzing N-glycosyl compounds"/>
    <property type="evidence" value="ECO:0007669"/>
    <property type="project" value="UniProtKB-UniRule"/>
</dbReference>
<dbReference type="GO" id="GO:0006284">
    <property type="term" value="P:base-excision repair"/>
    <property type="evidence" value="ECO:0007669"/>
    <property type="project" value="UniProtKB-UniRule"/>
</dbReference>
<dbReference type="CDD" id="cd00056">
    <property type="entry name" value="ENDO3c"/>
    <property type="match status" value="1"/>
</dbReference>
<dbReference type="Gene3D" id="1.10.1670.10">
    <property type="entry name" value="Helix-hairpin-Helix base-excision DNA repair enzymes (C-terminal)"/>
    <property type="match status" value="1"/>
</dbReference>
<dbReference type="Gene3D" id="1.10.340.30">
    <property type="entry name" value="Hypothetical protein, domain 2"/>
    <property type="match status" value="1"/>
</dbReference>
<dbReference type="HAMAP" id="MF_00241">
    <property type="entry name" value="Ogg"/>
    <property type="match status" value="1"/>
</dbReference>
<dbReference type="InterPro" id="IPR012092">
    <property type="entry name" value="DNA_glyclase/AP_lyase_Ogg"/>
</dbReference>
<dbReference type="InterPro" id="IPR011257">
    <property type="entry name" value="DNA_glycosylase"/>
</dbReference>
<dbReference type="InterPro" id="IPR003265">
    <property type="entry name" value="HhH-GPD_domain"/>
</dbReference>
<dbReference type="InterPro" id="IPR023170">
    <property type="entry name" value="HhH_base_excis_C"/>
</dbReference>
<dbReference type="NCBIfam" id="NF002305">
    <property type="entry name" value="PRK01229.1"/>
    <property type="match status" value="1"/>
</dbReference>
<dbReference type="Pfam" id="PF22175">
    <property type="entry name" value="Ogg-HhH"/>
    <property type="match status" value="1"/>
</dbReference>
<dbReference type="PIRSF" id="PIRSF005954">
    <property type="entry name" value="Thrmst_ogg"/>
    <property type="match status" value="1"/>
</dbReference>
<dbReference type="SMART" id="SM00478">
    <property type="entry name" value="ENDO3c"/>
    <property type="match status" value="1"/>
</dbReference>
<dbReference type="SUPFAM" id="SSF48150">
    <property type="entry name" value="DNA-glycosylase"/>
    <property type="match status" value="1"/>
</dbReference>
<name>OGG1_SULAC</name>
<proteinExistence type="inferred from homology"/>
<sequence length="203" mass="23869">MLRSLVLNEKLRARVLERAEEFLLNNKADEEVWFRELVLCILTSNSSFISAYKSMNYILDKILYMDEKEISILLQESGYRFYNLKAKYLYRAKNLYGKVKKTIKEIADKDQMQAREFIATHIYGIGYKEASHFLRNVGYLDLAIIDRHILRFINNLGIPIKLKSKREYLLAESLLRSIANNLNVQVGLLDLFIFFKQTNTIVK</sequence>
<comment type="function">
    <text evidence="1">Catalyzes the excision of an oxidatively damaged form of guanine (7,8-dihydro-8-oxoguanine = 8-oxoG) from DNA. Also cleaves the DNA backbone at apurinic/apyrimidinic sites (AP sites).</text>
</comment>
<comment type="catalytic activity">
    <reaction evidence="1">
        <text>2'-deoxyribonucleotide-(2'-deoxyribose 5'-phosphate)-2'-deoxyribonucleotide-DNA = a 3'-end 2'-deoxyribonucleotide-(2,3-dehydro-2,3-deoxyribose 5'-phosphate)-DNA + a 5'-end 5'-phospho-2'-deoxyribonucleoside-DNA + H(+)</text>
        <dbReference type="Rhea" id="RHEA:66592"/>
        <dbReference type="Rhea" id="RHEA-COMP:13180"/>
        <dbReference type="Rhea" id="RHEA-COMP:16897"/>
        <dbReference type="Rhea" id="RHEA-COMP:17067"/>
        <dbReference type="ChEBI" id="CHEBI:15378"/>
        <dbReference type="ChEBI" id="CHEBI:136412"/>
        <dbReference type="ChEBI" id="CHEBI:157695"/>
        <dbReference type="ChEBI" id="CHEBI:167181"/>
        <dbReference type="EC" id="4.2.99.18"/>
    </reaction>
</comment>
<comment type="similarity">
    <text evidence="1">Belongs to the type-2 OGG1 family.</text>
</comment>
<accession>Q4J929</accession>
<protein>
    <recommendedName>
        <fullName evidence="1">8-oxoguanine DNA glycosylase/AP lyase</fullName>
    </recommendedName>
    <domain>
        <recommendedName>
            <fullName evidence="1">8-oxoguanine DNA glycosylase</fullName>
            <shortName evidence="1">8-oxoG DNA glycosylase</shortName>
            <ecNumber evidence="1">3.2.2.-</ecNumber>
        </recommendedName>
    </domain>
    <domain>
        <recommendedName>
            <fullName evidence="1">DNA-(apurinic or apyrimidinic site) lyase</fullName>
            <shortName evidence="1">AP lyase</shortName>
            <ecNumber evidence="1">4.2.99.18</ecNumber>
        </recommendedName>
    </domain>
</protein>
<evidence type="ECO:0000255" key="1">
    <source>
        <dbReference type="HAMAP-Rule" id="MF_00241"/>
    </source>
</evidence>
<reference key="1">
    <citation type="journal article" date="2005" name="J. Bacteriol.">
        <title>The genome of Sulfolobus acidocaldarius, a model organism of the Crenarchaeota.</title>
        <authorList>
            <person name="Chen L."/>
            <person name="Bruegger K."/>
            <person name="Skovgaard M."/>
            <person name="Redder P."/>
            <person name="She Q."/>
            <person name="Torarinsson E."/>
            <person name="Greve B."/>
            <person name="Awayez M."/>
            <person name="Zibat A."/>
            <person name="Klenk H.-P."/>
            <person name="Garrett R.A."/>
        </authorList>
    </citation>
    <scope>NUCLEOTIDE SEQUENCE [LARGE SCALE GENOMIC DNA]</scope>
    <source>
        <strain>ATCC 33909 / DSM 639 / JCM 8929 / NBRC 15157 / NCIMB 11770</strain>
    </source>
</reference>
<keyword id="KW-0227">DNA damage</keyword>
<keyword id="KW-0234">DNA repair</keyword>
<keyword id="KW-0326">Glycosidase</keyword>
<keyword id="KW-0378">Hydrolase</keyword>
<keyword id="KW-0456">Lyase</keyword>
<keyword id="KW-0511">Multifunctional enzyme</keyword>
<keyword id="KW-1185">Reference proteome</keyword>
<feature type="chain" id="PRO_0000159565" description="8-oxoguanine DNA glycosylase/AP lyase">
    <location>
        <begin position="1"/>
        <end position="203"/>
    </location>
</feature>
<feature type="active site" evidence="1">
    <location>
        <position position="128"/>
    </location>
</feature>
<feature type="active site" evidence="1">
    <location>
        <position position="146"/>
    </location>
</feature>
<feature type="site" description="Important for guanine/8-oxoguanine distinction" evidence="1">
    <location>
        <position position="203"/>
    </location>
</feature>
<organism>
    <name type="scientific">Sulfolobus acidocaldarius (strain ATCC 33909 / DSM 639 / JCM 8929 / NBRC 15157 / NCIMB 11770)</name>
    <dbReference type="NCBI Taxonomy" id="330779"/>
    <lineage>
        <taxon>Archaea</taxon>
        <taxon>Thermoproteota</taxon>
        <taxon>Thermoprotei</taxon>
        <taxon>Sulfolobales</taxon>
        <taxon>Sulfolobaceae</taxon>
        <taxon>Sulfolobus</taxon>
    </lineage>
</organism>
<gene>
    <name evidence="1" type="primary">ogg</name>
    <name type="ordered locus">Saci_1367</name>
</gene>